<name>DNAK_KOCRD</name>
<comment type="function">
    <text evidence="1">Acts as a chaperone.</text>
</comment>
<comment type="induction">
    <text evidence="1">By stress conditions e.g. heat shock.</text>
</comment>
<comment type="similarity">
    <text evidence="1">Belongs to the heat shock protein 70 family.</text>
</comment>
<accession>B2GGP0</accession>
<sequence>MSRAVGIDLGTTNSVVAVLEGGEPVVIANAEGNRTTPSVVAFSKDGETLVGDVAKRQAVTNVDRTVASVKRHMGTDWTTEIDGKKYTPQEISARTLMKLKADAESYLGDTVTDAVITVPAYFNDAERQATKEAGEIAGMNVLRIVNEPTAAALAYGLEKGKEDELILVFDLGGGTFDVSLLEVGKDEDDFSTIQVRATAGDNRLGGDDWDQRIVDWLLEQVKSKTGADLSKDKIALQRLKEAAEQAKKELSSATSTTISLQYLSVTPEGPVHLDEKLSRAKFEDLTKDLLARTEKPFKDVISEAGINVSDIDHVVLVGGSTRMPAVVEKVTELAGKAPNKGVNPDEVVAIGAAIQAGVLKGDRKDVLLIDVTPLSLGIETKGGVMTKLIERNTAIPTKRSETFTTAEDNQPSVSIQVFQGEREFTRDNKNLGTFELTGIAPAPRGMPQIEVTFDIDANGIVHVSAKDKGTGKEQSMTITGGTSLSKEDIDRMVKDAEANADADKQRREAADRRNNAEQTAYSVEKLIKDDEGAIPEDVKSEVQADVDAVKAALEGDDDDAVKTAFEKLQSSQTKIGEALYAQSQAEGAAGAGAGAAGAEGAQAKEDDDIVDAEVVDDDNDGKK</sequence>
<proteinExistence type="inferred from homology"/>
<gene>
    <name evidence="1" type="primary">dnaK</name>
    <name type="ordered locus">KRH_03980</name>
</gene>
<reference key="1">
    <citation type="journal article" date="2008" name="J. Bacteriol.">
        <title>Complete genome sequence of the soil actinomycete Kocuria rhizophila.</title>
        <authorList>
            <person name="Takarada H."/>
            <person name="Sekine M."/>
            <person name="Kosugi H."/>
            <person name="Matsuo Y."/>
            <person name="Fujisawa T."/>
            <person name="Omata S."/>
            <person name="Kishi E."/>
            <person name="Shimizu A."/>
            <person name="Tsukatani N."/>
            <person name="Tanikawa S."/>
            <person name="Fujita N."/>
            <person name="Harayama S."/>
        </authorList>
    </citation>
    <scope>NUCLEOTIDE SEQUENCE [LARGE SCALE GENOMIC DNA]</scope>
    <source>
        <strain>ATCC 9341 / DSM 348 / NBRC 103217 / DC2201</strain>
    </source>
</reference>
<keyword id="KW-0067">ATP-binding</keyword>
<keyword id="KW-0143">Chaperone</keyword>
<keyword id="KW-0547">Nucleotide-binding</keyword>
<keyword id="KW-0597">Phosphoprotein</keyword>
<keyword id="KW-1185">Reference proteome</keyword>
<keyword id="KW-0346">Stress response</keyword>
<dbReference type="EMBL" id="AP009152">
    <property type="protein sequence ID" value="BAG28745.1"/>
    <property type="molecule type" value="Genomic_DNA"/>
</dbReference>
<dbReference type="RefSeq" id="WP_012397472.1">
    <property type="nucleotide sequence ID" value="NC_010617.1"/>
</dbReference>
<dbReference type="SMR" id="B2GGP0"/>
<dbReference type="STRING" id="378753.KRH_03980"/>
<dbReference type="KEGG" id="krh:KRH_03980"/>
<dbReference type="eggNOG" id="COG0443">
    <property type="taxonomic scope" value="Bacteria"/>
</dbReference>
<dbReference type="HOGENOM" id="CLU_005965_2_4_11"/>
<dbReference type="OrthoDB" id="9766019at2"/>
<dbReference type="Proteomes" id="UP000008838">
    <property type="component" value="Chromosome"/>
</dbReference>
<dbReference type="GO" id="GO:0005524">
    <property type="term" value="F:ATP binding"/>
    <property type="evidence" value="ECO:0007669"/>
    <property type="project" value="UniProtKB-UniRule"/>
</dbReference>
<dbReference type="GO" id="GO:0140662">
    <property type="term" value="F:ATP-dependent protein folding chaperone"/>
    <property type="evidence" value="ECO:0007669"/>
    <property type="project" value="InterPro"/>
</dbReference>
<dbReference type="GO" id="GO:0051082">
    <property type="term" value="F:unfolded protein binding"/>
    <property type="evidence" value="ECO:0007669"/>
    <property type="project" value="InterPro"/>
</dbReference>
<dbReference type="CDD" id="cd10234">
    <property type="entry name" value="ASKHA_NBD_HSP70_DnaK-like"/>
    <property type="match status" value="1"/>
</dbReference>
<dbReference type="FunFam" id="2.60.34.10:FF:000014">
    <property type="entry name" value="Chaperone protein DnaK HSP70"/>
    <property type="match status" value="1"/>
</dbReference>
<dbReference type="FunFam" id="1.20.1270.10:FF:000001">
    <property type="entry name" value="Molecular chaperone DnaK"/>
    <property type="match status" value="1"/>
</dbReference>
<dbReference type="FunFam" id="3.30.420.40:FF:000071">
    <property type="entry name" value="Molecular chaperone DnaK"/>
    <property type="match status" value="1"/>
</dbReference>
<dbReference type="FunFam" id="3.90.640.10:FF:000003">
    <property type="entry name" value="Molecular chaperone DnaK"/>
    <property type="match status" value="1"/>
</dbReference>
<dbReference type="Gene3D" id="1.20.1270.10">
    <property type="match status" value="1"/>
</dbReference>
<dbReference type="Gene3D" id="3.30.420.40">
    <property type="match status" value="2"/>
</dbReference>
<dbReference type="Gene3D" id="3.90.640.10">
    <property type="entry name" value="Actin, Chain A, domain 4"/>
    <property type="match status" value="1"/>
</dbReference>
<dbReference type="Gene3D" id="2.60.34.10">
    <property type="entry name" value="Substrate Binding Domain Of DNAk, Chain A, domain 1"/>
    <property type="match status" value="1"/>
</dbReference>
<dbReference type="HAMAP" id="MF_00332">
    <property type="entry name" value="DnaK"/>
    <property type="match status" value="1"/>
</dbReference>
<dbReference type="InterPro" id="IPR043129">
    <property type="entry name" value="ATPase_NBD"/>
</dbReference>
<dbReference type="InterPro" id="IPR012725">
    <property type="entry name" value="Chaperone_DnaK"/>
</dbReference>
<dbReference type="InterPro" id="IPR018181">
    <property type="entry name" value="Heat_shock_70_CS"/>
</dbReference>
<dbReference type="InterPro" id="IPR029048">
    <property type="entry name" value="HSP70_C_sf"/>
</dbReference>
<dbReference type="InterPro" id="IPR029047">
    <property type="entry name" value="HSP70_peptide-bd_sf"/>
</dbReference>
<dbReference type="InterPro" id="IPR013126">
    <property type="entry name" value="Hsp_70_fam"/>
</dbReference>
<dbReference type="NCBIfam" id="NF001413">
    <property type="entry name" value="PRK00290.1"/>
    <property type="match status" value="1"/>
</dbReference>
<dbReference type="NCBIfam" id="TIGR02350">
    <property type="entry name" value="prok_dnaK"/>
    <property type="match status" value="1"/>
</dbReference>
<dbReference type="PANTHER" id="PTHR19375">
    <property type="entry name" value="HEAT SHOCK PROTEIN 70KDA"/>
    <property type="match status" value="1"/>
</dbReference>
<dbReference type="Pfam" id="PF00012">
    <property type="entry name" value="HSP70"/>
    <property type="match status" value="2"/>
</dbReference>
<dbReference type="PRINTS" id="PR00301">
    <property type="entry name" value="HEATSHOCK70"/>
</dbReference>
<dbReference type="SUPFAM" id="SSF53067">
    <property type="entry name" value="Actin-like ATPase domain"/>
    <property type="match status" value="2"/>
</dbReference>
<dbReference type="SUPFAM" id="SSF100934">
    <property type="entry name" value="Heat shock protein 70kD (HSP70), C-terminal subdomain"/>
    <property type="match status" value="1"/>
</dbReference>
<dbReference type="SUPFAM" id="SSF100920">
    <property type="entry name" value="Heat shock protein 70kD (HSP70), peptide-binding domain"/>
    <property type="match status" value="1"/>
</dbReference>
<dbReference type="PROSITE" id="PS00297">
    <property type="entry name" value="HSP70_1"/>
    <property type="match status" value="1"/>
</dbReference>
<dbReference type="PROSITE" id="PS00329">
    <property type="entry name" value="HSP70_2"/>
    <property type="match status" value="1"/>
</dbReference>
<dbReference type="PROSITE" id="PS01036">
    <property type="entry name" value="HSP70_3"/>
    <property type="match status" value="1"/>
</dbReference>
<feature type="chain" id="PRO_1000119716" description="Chaperone protein DnaK">
    <location>
        <begin position="1"/>
        <end position="623"/>
    </location>
</feature>
<feature type="region of interest" description="Disordered" evidence="2">
    <location>
        <begin position="497"/>
        <end position="521"/>
    </location>
</feature>
<feature type="region of interest" description="Disordered" evidence="2">
    <location>
        <begin position="585"/>
        <end position="623"/>
    </location>
</feature>
<feature type="compositionally biased region" description="Basic and acidic residues" evidence="2">
    <location>
        <begin position="497"/>
        <end position="515"/>
    </location>
</feature>
<feature type="compositionally biased region" description="Acidic residues" evidence="2">
    <location>
        <begin position="605"/>
        <end position="623"/>
    </location>
</feature>
<feature type="modified residue" description="Phosphothreonine; by autocatalysis" evidence="1">
    <location>
        <position position="175"/>
    </location>
</feature>
<evidence type="ECO:0000255" key="1">
    <source>
        <dbReference type="HAMAP-Rule" id="MF_00332"/>
    </source>
</evidence>
<evidence type="ECO:0000256" key="2">
    <source>
        <dbReference type="SAM" id="MobiDB-lite"/>
    </source>
</evidence>
<protein>
    <recommendedName>
        <fullName evidence="1">Chaperone protein DnaK</fullName>
    </recommendedName>
    <alternativeName>
        <fullName evidence="1">HSP70</fullName>
    </alternativeName>
    <alternativeName>
        <fullName evidence="1">Heat shock 70 kDa protein</fullName>
    </alternativeName>
    <alternativeName>
        <fullName evidence="1">Heat shock protein 70</fullName>
    </alternativeName>
</protein>
<organism>
    <name type="scientific">Kocuria rhizophila (strain ATCC 9341 / DSM 348 / NBRC 103217 / DC2201)</name>
    <dbReference type="NCBI Taxonomy" id="378753"/>
    <lineage>
        <taxon>Bacteria</taxon>
        <taxon>Bacillati</taxon>
        <taxon>Actinomycetota</taxon>
        <taxon>Actinomycetes</taxon>
        <taxon>Micrococcales</taxon>
        <taxon>Micrococcaceae</taxon>
        <taxon>Kocuria</taxon>
    </lineage>
</organism>